<comment type="subcellular location">
    <subcellularLocation>
        <location evidence="2">Cytoplasm</location>
    </subcellularLocation>
</comment>
<comment type="similarity">
    <text evidence="2">Belongs to the GSP E family.</text>
</comment>
<evidence type="ECO:0000255" key="1"/>
<evidence type="ECO:0000305" key="2"/>
<feature type="chain" id="PRO_0000207301" description="Probable conjugal transfer protein TrbB">
    <location>
        <begin position="1"/>
        <end position="325"/>
    </location>
</feature>
<feature type="binding site" evidence="1">
    <location>
        <begin position="151"/>
        <end position="158"/>
    </location>
    <ligand>
        <name>ATP</name>
        <dbReference type="ChEBI" id="CHEBI:30616"/>
    </ligand>
</feature>
<accession>P55395</accession>
<geneLocation type="plasmid">
    <name>sym pNGR234a</name>
</geneLocation>
<proteinExistence type="inferred from homology"/>
<keyword id="KW-0067">ATP-binding</keyword>
<keyword id="KW-0184">Conjugation</keyword>
<keyword id="KW-0963">Cytoplasm</keyword>
<keyword id="KW-0547">Nucleotide-binding</keyword>
<keyword id="KW-0614">Plasmid</keyword>
<keyword id="KW-1185">Reference proteome</keyword>
<keyword id="KW-0813">Transport</keyword>
<organism>
    <name type="scientific">Sinorhizobium fredii (strain NBRC 101917 / NGR234)</name>
    <dbReference type="NCBI Taxonomy" id="394"/>
    <lineage>
        <taxon>Bacteria</taxon>
        <taxon>Pseudomonadati</taxon>
        <taxon>Pseudomonadota</taxon>
        <taxon>Alphaproteobacteria</taxon>
        <taxon>Hyphomicrobiales</taxon>
        <taxon>Rhizobiaceae</taxon>
        <taxon>Sinorhizobium/Ensifer group</taxon>
        <taxon>Sinorhizobium</taxon>
    </lineage>
</organism>
<reference key="1">
    <citation type="journal article" date="1997" name="Nature">
        <title>Molecular basis of symbiosis between Rhizobium and legumes.</title>
        <authorList>
            <person name="Freiberg C.A."/>
            <person name="Fellay R."/>
            <person name="Bairoch A."/>
            <person name="Broughton W.J."/>
            <person name="Rosenthal A."/>
            <person name="Perret X."/>
        </authorList>
    </citation>
    <scope>NUCLEOTIDE SEQUENCE [LARGE SCALE GENOMIC DNA]</scope>
    <source>
        <strain>NBRC 101917 / NGR234</strain>
    </source>
</reference>
<reference key="2">
    <citation type="journal article" date="2009" name="Appl. Environ. Microbiol.">
        <title>Rhizobium sp. strain NGR234 possesses a remarkable number of secretion systems.</title>
        <authorList>
            <person name="Schmeisser C."/>
            <person name="Liesegang H."/>
            <person name="Krysciak D."/>
            <person name="Bakkou N."/>
            <person name="Le Quere A."/>
            <person name="Wollherr A."/>
            <person name="Heinemeyer I."/>
            <person name="Morgenstern B."/>
            <person name="Pommerening-Roeser A."/>
            <person name="Flores M."/>
            <person name="Palacios R."/>
            <person name="Brenner S."/>
            <person name="Gottschalk G."/>
            <person name="Schmitz R.A."/>
            <person name="Broughton W.J."/>
            <person name="Perret X."/>
            <person name="Strittmatter A.W."/>
            <person name="Streit W.R."/>
        </authorList>
    </citation>
    <scope>NUCLEOTIDE SEQUENCE [LARGE SCALE GENOMIC DNA]</scope>
    <source>
        <strain>NBRC 101917 / NGR234</strain>
    </source>
</reference>
<sequence>MEQLRSHPRLVRKLQEALGDQLCVALDDSNVVEIMLNPDGKLFIERLGHGVAPAGEMSSAAAEMVIGTVAHALQSEVDTEQPIISGELPIGGHRFEGLLPPVVAKPSFTIRRRASRLIPLDDYVRSGVMTEAQAATIRSAIDSRLNIIISGGTASGKTTLANAVIHEIVRSAPEDRLVILEDTAEIQCAADNAVLLRTSDTVDMARLLKSTMRLRPDRIVVGEVRDGAALTLLKAWNTGHPGGVATIHSNTATSALRRLEQLTAEASQQPMHEVIGEVVDLIVSIERTPRGRRVRDIIQVERFANGRYEIESDQLTEEREERHVA</sequence>
<protein>
    <recommendedName>
        <fullName>Probable conjugal transfer protein TrbB</fullName>
    </recommendedName>
</protein>
<dbReference type="EMBL" id="U00090">
    <property type="protein sequence ID" value="AAB92428.1"/>
    <property type="molecule type" value="Genomic_DNA"/>
</dbReference>
<dbReference type="RefSeq" id="NP_443805.1">
    <property type="nucleotide sequence ID" value="NC_000914.2"/>
</dbReference>
<dbReference type="RefSeq" id="WP_010875431.1">
    <property type="nucleotide sequence ID" value="NC_000914.2"/>
</dbReference>
<dbReference type="SMR" id="P55395"/>
<dbReference type="KEGG" id="rhi:NGR_a04210"/>
<dbReference type="PATRIC" id="fig|394.7.peg.442"/>
<dbReference type="eggNOG" id="COG4962">
    <property type="taxonomic scope" value="Bacteria"/>
</dbReference>
<dbReference type="HOGENOM" id="CLU_005379_3_0_5"/>
<dbReference type="OrthoDB" id="9810761at2"/>
<dbReference type="Proteomes" id="UP000001054">
    <property type="component" value="Plasmid pNGR234a"/>
</dbReference>
<dbReference type="GO" id="GO:0005737">
    <property type="term" value="C:cytoplasm"/>
    <property type="evidence" value="ECO:0007669"/>
    <property type="project" value="UniProtKB-SubCell"/>
</dbReference>
<dbReference type="GO" id="GO:0005524">
    <property type="term" value="F:ATP binding"/>
    <property type="evidence" value="ECO:0007669"/>
    <property type="project" value="UniProtKB-KW"/>
</dbReference>
<dbReference type="GO" id="GO:0016887">
    <property type="term" value="F:ATP hydrolysis activity"/>
    <property type="evidence" value="ECO:0007669"/>
    <property type="project" value="InterPro"/>
</dbReference>
<dbReference type="CDD" id="cd01130">
    <property type="entry name" value="VirB11-like_ATPase"/>
    <property type="match status" value="1"/>
</dbReference>
<dbReference type="Gene3D" id="3.30.450.90">
    <property type="match status" value="1"/>
</dbReference>
<dbReference type="Gene3D" id="3.40.50.300">
    <property type="entry name" value="P-loop containing nucleotide triphosphate hydrolases"/>
    <property type="match status" value="1"/>
</dbReference>
<dbReference type="InterPro" id="IPR014149">
    <property type="entry name" value="Conjug-transfer_TrbB"/>
</dbReference>
<dbReference type="InterPro" id="IPR027417">
    <property type="entry name" value="P-loop_NTPase"/>
</dbReference>
<dbReference type="InterPro" id="IPR001482">
    <property type="entry name" value="T2SS/T4SS_dom"/>
</dbReference>
<dbReference type="InterPro" id="IPR050921">
    <property type="entry name" value="T4SS_GSP_E_ATPase"/>
</dbReference>
<dbReference type="NCBIfam" id="NF010407">
    <property type="entry name" value="PRK13833.1"/>
    <property type="match status" value="1"/>
</dbReference>
<dbReference type="NCBIfam" id="TIGR02782">
    <property type="entry name" value="TrbB_P"/>
    <property type="match status" value="1"/>
</dbReference>
<dbReference type="PANTHER" id="PTHR30486">
    <property type="entry name" value="TWITCHING MOTILITY PROTEIN PILT"/>
    <property type="match status" value="1"/>
</dbReference>
<dbReference type="PANTHER" id="PTHR30486:SF6">
    <property type="entry name" value="TYPE IV PILUS RETRACTATION ATPASE PILT"/>
    <property type="match status" value="1"/>
</dbReference>
<dbReference type="Pfam" id="PF00437">
    <property type="entry name" value="T2SSE"/>
    <property type="match status" value="1"/>
</dbReference>
<dbReference type="SUPFAM" id="SSF52540">
    <property type="entry name" value="P-loop containing nucleoside triphosphate hydrolases"/>
    <property type="match status" value="1"/>
</dbReference>
<dbReference type="PROSITE" id="PS00662">
    <property type="entry name" value="T2SP_E"/>
    <property type="match status" value="1"/>
</dbReference>
<gene>
    <name type="primary">trbB</name>
    <name type="ordered locus">NGR_a04210</name>
    <name type="ORF">y4cM</name>
</gene>
<name>TRBB_SINFN</name>